<accession>A6TC47</accession>
<comment type="function">
    <text evidence="1">DNA ligase that catalyzes the formation of phosphodiester linkages between 5'-phosphoryl and 3'-hydroxyl groups in double-stranded DNA using NAD as a coenzyme and as the energy source for the reaction. It is essential for DNA replication and repair of damaged DNA.</text>
</comment>
<comment type="catalytic activity">
    <reaction evidence="1">
        <text>NAD(+) + (deoxyribonucleotide)n-3'-hydroxyl + 5'-phospho-(deoxyribonucleotide)m = (deoxyribonucleotide)n+m + AMP + beta-nicotinamide D-nucleotide.</text>
        <dbReference type="EC" id="6.5.1.2"/>
    </reaction>
</comment>
<comment type="cofactor">
    <cofactor evidence="1">
        <name>Mg(2+)</name>
        <dbReference type="ChEBI" id="CHEBI:18420"/>
    </cofactor>
    <cofactor evidence="1">
        <name>Mn(2+)</name>
        <dbReference type="ChEBI" id="CHEBI:29035"/>
    </cofactor>
</comment>
<comment type="similarity">
    <text evidence="1">Belongs to the NAD-dependent DNA ligase family. LigA subfamily.</text>
</comment>
<evidence type="ECO:0000255" key="1">
    <source>
        <dbReference type="HAMAP-Rule" id="MF_01588"/>
    </source>
</evidence>
<protein>
    <recommendedName>
        <fullName evidence="1">DNA ligase</fullName>
        <ecNumber evidence="1">6.5.1.2</ecNumber>
    </recommendedName>
    <alternativeName>
        <fullName evidence="1">Polydeoxyribonucleotide synthase [NAD(+)]</fullName>
    </alternativeName>
</protein>
<dbReference type="EC" id="6.5.1.2" evidence="1"/>
<dbReference type="EMBL" id="CP000647">
    <property type="protein sequence ID" value="ABR78168.1"/>
    <property type="molecule type" value="Genomic_DNA"/>
</dbReference>
<dbReference type="RefSeq" id="WP_004180820.1">
    <property type="nucleotide sequence ID" value="NC_009648.1"/>
</dbReference>
<dbReference type="SMR" id="A6TC47"/>
<dbReference type="STRING" id="272620.KPN_02758"/>
<dbReference type="jPOST" id="A6TC47"/>
<dbReference type="PaxDb" id="272620-KPN_02758"/>
<dbReference type="EnsemblBacteria" id="ABR78168">
    <property type="protein sequence ID" value="ABR78168"/>
    <property type="gene ID" value="KPN_02758"/>
</dbReference>
<dbReference type="KEGG" id="kpn:KPN_02758"/>
<dbReference type="HOGENOM" id="CLU_007764_2_1_6"/>
<dbReference type="Proteomes" id="UP000000265">
    <property type="component" value="Chromosome"/>
</dbReference>
<dbReference type="GO" id="GO:0005829">
    <property type="term" value="C:cytosol"/>
    <property type="evidence" value="ECO:0007669"/>
    <property type="project" value="TreeGrafter"/>
</dbReference>
<dbReference type="GO" id="GO:0003677">
    <property type="term" value="F:DNA binding"/>
    <property type="evidence" value="ECO:0007669"/>
    <property type="project" value="InterPro"/>
</dbReference>
<dbReference type="GO" id="GO:0003911">
    <property type="term" value="F:DNA ligase (NAD+) activity"/>
    <property type="evidence" value="ECO:0007669"/>
    <property type="project" value="UniProtKB-UniRule"/>
</dbReference>
<dbReference type="GO" id="GO:0046872">
    <property type="term" value="F:metal ion binding"/>
    <property type="evidence" value="ECO:0007669"/>
    <property type="project" value="UniProtKB-KW"/>
</dbReference>
<dbReference type="GO" id="GO:0006281">
    <property type="term" value="P:DNA repair"/>
    <property type="evidence" value="ECO:0007669"/>
    <property type="project" value="UniProtKB-KW"/>
</dbReference>
<dbReference type="GO" id="GO:0006260">
    <property type="term" value="P:DNA replication"/>
    <property type="evidence" value="ECO:0007669"/>
    <property type="project" value="UniProtKB-KW"/>
</dbReference>
<dbReference type="CDD" id="cd17748">
    <property type="entry name" value="BRCT_DNA_ligase_like"/>
    <property type="match status" value="1"/>
</dbReference>
<dbReference type="CDD" id="cd00114">
    <property type="entry name" value="LIGANc"/>
    <property type="match status" value="1"/>
</dbReference>
<dbReference type="FunFam" id="1.10.150.20:FF:000006">
    <property type="entry name" value="DNA ligase"/>
    <property type="match status" value="1"/>
</dbReference>
<dbReference type="FunFam" id="1.10.150.20:FF:000007">
    <property type="entry name" value="DNA ligase"/>
    <property type="match status" value="1"/>
</dbReference>
<dbReference type="FunFam" id="1.10.287.610:FF:000002">
    <property type="entry name" value="DNA ligase"/>
    <property type="match status" value="1"/>
</dbReference>
<dbReference type="FunFam" id="2.40.50.140:FF:000012">
    <property type="entry name" value="DNA ligase"/>
    <property type="match status" value="1"/>
</dbReference>
<dbReference type="FunFam" id="3.30.470.30:FF:000001">
    <property type="entry name" value="DNA ligase"/>
    <property type="match status" value="1"/>
</dbReference>
<dbReference type="FunFam" id="3.40.50.10190:FF:000004">
    <property type="entry name" value="DNA ligase"/>
    <property type="match status" value="1"/>
</dbReference>
<dbReference type="FunFam" id="6.20.10.30:FF:000001">
    <property type="entry name" value="DNA ligase"/>
    <property type="match status" value="1"/>
</dbReference>
<dbReference type="Gene3D" id="6.20.10.30">
    <property type="match status" value="1"/>
</dbReference>
<dbReference type="Gene3D" id="1.10.150.20">
    <property type="entry name" value="5' to 3' exonuclease, C-terminal subdomain"/>
    <property type="match status" value="2"/>
</dbReference>
<dbReference type="Gene3D" id="3.40.50.10190">
    <property type="entry name" value="BRCT domain"/>
    <property type="match status" value="1"/>
</dbReference>
<dbReference type="Gene3D" id="3.30.470.30">
    <property type="entry name" value="DNA ligase/mRNA capping enzyme"/>
    <property type="match status" value="1"/>
</dbReference>
<dbReference type="Gene3D" id="1.10.287.610">
    <property type="entry name" value="Helix hairpin bin"/>
    <property type="match status" value="1"/>
</dbReference>
<dbReference type="Gene3D" id="2.40.50.140">
    <property type="entry name" value="Nucleic acid-binding proteins"/>
    <property type="match status" value="1"/>
</dbReference>
<dbReference type="HAMAP" id="MF_01588">
    <property type="entry name" value="DNA_ligase_A"/>
    <property type="match status" value="1"/>
</dbReference>
<dbReference type="InterPro" id="IPR001357">
    <property type="entry name" value="BRCT_dom"/>
</dbReference>
<dbReference type="InterPro" id="IPR036420">
    <property type="entry name" value="BRCT_dom_sf"/>
</dbReference>
<dbReference type="InterPro" id="IPR041663">
    <property type="entry name" value="DisA/LigA_HHH"/>
</dbReference>
<dbReference type="InterPro" id="IPR001679">
    <property type="entry name" value="DNA_ligase"/>
</dbReference>
<dbReference type="InterPro" id="IPR018239">
    <property type="entry name" value="DNA_ligase_AS"/>
</dbReference>
<dbReference type="InterPro" id="IPR033136">
    <property type="entry name" value="DNA_ligase_CS"/>
</dbReference>
<dbReference type="InterPro" id="IPR013839">
    <property type="entry name" value="DNAligase_adenylation"/>
</dbReference>
<dbReference type="InterPro" id="IPR013840">
    <property type="entry name" value="DNAligase_N"/>
</dbReference>
<dbReference type="InterPro" id="IPR003583">
    <property type="entry name" value="Hlx-hairpin-Hlx_DNA-bd_motif"/>
</dbReference>
<dbReference type="InterPro" id="IPR012340">
    <property type="entry name" value="NA-bd_OB-fold"/>
</dbReference>
<dbReference type="InterPro" id="IPR004150">
    <property type="entry name" value="NAD_DNA_ligase_OB"/>
</dbReference>
<dbReference type="InterPro" id="IPR010994">
    <property type="entry name" value="RuvA_2-like"/>
</dbReference>
<dbReference type="InterPro" id="IPR004149">
    <property type="entry name" value="Znf_DNAligase_C4"/>
</dbReference>
<dbReference type="NCBIfam" id="TIGR00575">
    <property type="entry name" value="dnlj"/>
    <property type="match status" value="1"/>
</dbReference>
<dbReference type="NCBIfam" id="NF005932">
    <property type="entry name" value="PRK07956.1"/>
    <property type="match status" value="1"/>
</dbReference>
<dbReference type="PANTHER" id="PTHR23389">
    <property type="entry name" value="CHROMOSOME TRANSMISSION FIDELITY FACTOR 18"/>
    <property type="match status" value="1"/>
</dbReference>
<dbReference type="PANTHER" id="PTHR23389:SF9">
    <property type="entry name" value="DNA LIGASE"/>
    <property type="match status" value="1"/>
</dbReference>
<dbReference type="Pfam" id="PF00533">
    <property type="entry name" value="BRCT"/>
    <property type="match status" value="1"/>
</dbReference>
<dbReference type="Pfam" id="PF01653">
    <property type="entry name" value="DNA_ligase_aden"/>
    <property type="match status" value="1"/>
</dbReference>
<dbReference type="Pfam" id="PF03120">
    <property type="entry name" value="DNA_ligase_OB"/>
    <property type="match status" value="1"/>
</dbReference>
<dbReference type="Pfam" id="PF03119">
    <property type="entry name" value="DNA_ligase_ZBD"/>
    <property type="match status" value="1"/>
</dbReference>
<dbReference type="Pfam" id="PF12826">
    <property type="entry name" value="HHH_2"/>
    <property type="match status" value="1"/>
</dbReference>
<dbReference type="Pfam" id="PF14520">
    <property type="entry name" value="HHH_5"/>
    <property type="match status" value="1"/>
</dbReference>
<dbReference type="Pfam" id="PF22745">
    <property type="entry name" value="Nlig-Ia"/>
    <property type="match status" value="1"/>
</dbReference>
<dbReference type="PIRSF" id="PIRSF001604">
    <property type="entry name" value="LigA"/>
    <property type="match status" value="1"/>
</dbReference>
<dbReference type="SMART" id="SM00292">
    <property type="entry name" value="BRCT"/>
    <property type="match status" value="1"/>
</dbReference>
<dbReference type="SMART" id="SM00278">
    <property type="entry name" value="HhH1"/>
    <property type="match status" value="4"/>
</dbReference>
<dbReference type="SMART" id="SM00532">
    <property type="entry name" value="LIGANc"/>
    <property type="match status" value="1"/>
</dbReference>
<dbReference type="SUPFAM" id="SSF52113">
    <property type="entry name" value="BRCT domain"/>
    <property type="match status" value="1"/>
</dbReference>
<dbReference type="SUPFAM" id="SSF56091">
    <property type="entry name" value="DNA ligase/mRNA capping enzyme, catalytic domain"/>
    <property type="match status" value="1"/>
</dbReference>
<dbReference type="SUPFAM" id="SSF50249">
    <property type="entry name" value="Nucleic acid-binding proteins"/>
    <property type="match status" value="1"/>
</dbReference>
<dbReference type="SUPFAM" id="SSF47781">
    <property type="entry name" value="RuvA domain 2-like"/>
    <property type="match status" value="1"/>
</dbReference>
<dbReference type="PROSITE" id="PS50172">
    <property type="entry name" value="BRCT"/>
    <property type="match status" value="1"/>
</dbReference>
<dbReference type="PROSITE" id="PS01055">
    <property type="entry name" value="DNA_LIGASE_N1"/>
    <property type="match status" value="1"/>
</dbReference>
<dbReference type="PROSITE" id="PS01056">
    <property type="entry name" value="DNA_LIGASE_N2"/>
    <property type="match status" value="1"/>
</dbReference>
<sequence>MEPIEQQLTELRTTLRHHEYLYHVMDAPEVPDAEYDRLMRKLRELESQHPELITPDSPTQRVGAAPLTAFSQIRHEVPMLSLDNVFDEESFLAFNKRVQDRLKSTDHLTYCCELKLDGLAVSILYENGVLVQAATRGDGTTGEDITSNVRTIRAIPLKLHGENIPARLEVRGEVFLPQAGFEKINEEARRTGGKVFANPRNAAAGSLRQLDPRITAKRPLTFFCYGVGVLEGGELPASHSARLLQFKAWGLPVSDRVTLCHTPEEVLTYYRKVEEERPHLGFDIDGVVIKVDSLALQEQLGFVARAPRWAVAFKFPAQEQMTFVRDVEFQVGRTGAITPVARLEPVHVAGVLVSNATLHNADEIERLGLKIGDKVVIRRAGDVIPQVVNVVLSERPADARDVVFPTHCPVCQSDVERVEGEAVARCTGGLICGAQRKESLKHFVSRRALDVDGMGDKIIDQLVEKEYVHTPADLFRLTAGKLTGLDRMGPKSAQNVVNALEKAKETTFARFLYALGIREVGEATAAGLAAHFGTLEALEQASIEELQKVPDVGIVVATHTFNFFAEESNRDVIAQLLAEGVRWPAPVVVKAEEIDSPFAGKTVVLTGSLSQLSRDDAKARLVALGAKVAGSVSKKTDLVIAGEAAGSKLAKAQELGIEVIDEAEMMRLLGE</sequence>
<organism>
    <name type="scientific">Klebsiella pneumoniae subsp. pneumoniae (strain ATCC 700721 / MGH 78578)</name>
    <dbReference type="NCBI Taxonomy" id="272620"/>
    <lineage>
        <taxon>Bacteria</taxon>
        <taxon>Pseudomonadati</taxon>
        <taxon>Pseudomonadota</taxon>
        <taxon>Gammaproteobacteria</taxon>
        <taxon>Enterobacterales</taxon>
        <taxon>Enterobacteriaceae</taxon>
        <taxon>Klebsiella/Raoultella group</taxon>
        <taxon>Klebsiella</taxon>
        <taxon>Klebsiella pneumoniae complex</taxon>
    </lineage>
</organism>
<reference key="1">
    <citation type="submission" date="2006-09" db="EMBL/GenBank/DDBJ databases">
        <authorList>
            <consortium name="The Klebsiella pneumonia Genome Sequencing Project"/>
            <person name="McClelland M."/>
            <person name="Sanderson E.K."/>
            <person name="Spieth J."/>
            <person name="Clifton W.S."/>
            <person name="Latreille P."/>
            <person name="Sabo A."/>
            <person name="Pepin K."/>
            <person name="Bhonagiri V."/>
            <person name="Porwollik S."/>
            <person name="Ali J."/>
            <person name="Wilson R.K."/>
        </authorList>
    </citation>
    <scope>NUCLEOTIDE SEQUENCE [LARGE SCALE GENOMIC DNA]</scope>
    <source>
        <strain>ATCC 700721 / MGH 78578</strain>
    </source>
</reference>
<name>DNLJ_KLEP7</name>
<gene>
    <name evidence="1" type="primary">ligA</name>
    <name type="ordered locus">KPN78578_27070</name>
    <name type="ORF">KPN_02758</name>
</gene>
<proteinExistence type="inferred from homology"/>
<keyword id="KW-0227">DNA damage</keyword>
<keyword id="KW-0234">DNA repair</keyword>
<keyword id="KW-0235">DNA replication</keyword>
<keyword id="KW-0436">Ligase</keyword>
<keyword id="KW-0460">Magnesium</keyword>
<keyword id="KW-0464">Manganese</keyword>
<keyword id="KW-0479">Metal-binding</keyword>
<keyword id="KW-0520">NAD</keyword>
<keyword id="KW-0862">Zinc</keyword>
<feature type="chain" id="PRO_0000313270" description="DNA ligase">
    <location>
        <begin position="1"/>
        <end position="671"/>
    </location>
</feature>
<feature type="domain" description="BRCT" evidence="1">
    <location>
        <begin position="593"/>
        <end position="671"/>
    </location>
</feature>
<feature type="active site" description="N6-AMP-lysine intermediate" evidence="1">
    <location>
        <position position="115"/>
    </location>
</feature>
<feature type="binding site" evidence="1">
    <location>
        <begin position="32"/>
        <end position="36"/>
    </location>
    <ligand>
        <name>NAD(+)</name>
        <dbReference type="ChEBI" id="CHEBI:57540"/>
    </ligand>
</feature>
<feature type="binding site" evidence="1">
    <location>
        <begin position="81"/>
        <end position="82"/>
    </location>
    <ligand>
        <name>NAD(+)</name>
        <dbReference type="ChEBI" id="CHEBI:57540"/>
    </ligand>
</feature>
<feature type="binding site" evidence="1">
    <location>
        <position position="113"/>
    </location>
    <ligand>
        <name>NAD(+)</name>
        <dbReference type="ChEBI" id="CHEBI:57540"/>
    </ligand>
</feature>
<feature type="binding site" evidence="1">
    <location>
        <position position="136"/>
    </location>
    <ligand>
        <name>NAD(+)</name>
        <dbReference type="ChEBI" id="CHEBI:57540"/>
    </ligand>
</feature>
<feature type="binding site" evidence="1">
    <location>
        <position position="173"/>
    </location>
    <ligand>
        <name>NAD(+)</name>
        <dbReference type="ChEBI" id="CHEBI:57540"/>
    </ligand>
</feature>
<feature type="binding site" evidence="1">
    <location>
        <position position="290"/>
    </location>
    <ligand>
        <name>NAD(+)</name>
        <dbReference type="ChEBI" id="CHEBI:57540"/>
    </ligand>
</feature>
<feature type="binding site" evidence="1">
    <location>
        <position position="314"/>
    </location>
    <ligand>
        <name>NAD(+)</name>
        <dbReference type="ChEBI" id="CHEBI:57540"/>
    </ligand>
</feature>
<feature type="binding site" evidence="1">
    <location>
        <position position="408"/>
    </location>
    <ligand>
        <name>Zn(2+)</name>
        <dbReference type="ChEBI" id="CHEBI:29105"/>
    </ligand>
</feature>
<feature type="binding site" evidence="1">
    <location>
        <position position="411"/>
    </location>
    <ligand>
        <name>Zn(2+)</name>
        <dbReference type="ChEBI" id="CHEBI:29105"/>
    </ligand>
</feature>
<feature type="binding site" evidence="1">
    <location>
        <position position="426"/>
    </location>
    <ligand>
        <name>Zn(2+)</name>
        <dbReference type="ChEBI" id="CHEBI:29105"/>
    </ligand>
</feature>
<feature type="binding site" evidence="1">
    <location>
        <position position="432"/>
    </location>
    <ligand>
        <name>Zn(2+)</name>
        <dbReference type="ChEBI" id="CHEBI:29105"/>
    </ligand>
</feature>